<comment type="function">
    <text evidence="9">Catalyzes the ATP-dependent biosynthesis of glutamine from glutamate and ammonia.</text>
</comment>
<comment type="catalytic activity">
    <reaction evidence="9">
        <text>L-glutamate + NH4(+) + ATP = L-glutamine + ADP + phosphate + H(+)</text>
        <dbReference type="Rhea" id="RHEA:16169"/>
        <dbReference type="ChEBI" id="CHEBI:15378"/>
        <dbReference type="ChEBI" id="CHEBI:28938"/>
        <dbReference type="ChEBI" id="CHEBI:29985"/>
        <dbReference type="ChEBI" id="CHEBI:30616"/>
        <dbReference type="ChEBI" id="CHEBI:43474"/>
        <dbReference type="ChEBI" id="CHEBI:58359"/>
        <dbReference type="ChEBI" id="CHEBI:456216"/>
        <dbReference type="EC" id="6.3.1.2"/>
    </reaction>
</comment>
<comment type="cofactor">
    <cofactor evidence="1">
        <name>Mg(2+)</name>
        <dbReference type="ChEBI" id="CHEBI:18420"/>
    </cofactor>
    <text evidence="1">Binds 2 Mg(2+) ions per subunit.</text>
</comment>
<comment type="activity regulation">
    <text evidence="6">Inhibited by L-histidine (46%), L-arginine (38%) and L-methionine-DL-sulphoximine. The activity of this enzyme is not controlled by adenylation.</text>
</comment>
<comment type="subunit">
    <text evidence="6">Homohexamer.</text>
</comment>
<comment type="subcellular location">
    <subcellularLocation>
        <location evidence="8">Cytoplasm</location>
    </subcellularLocation>
</comment>
<comment type="similarity">
    <text evidence="8">Belongs to the glutamine synthetase family.</text>
</comment>
<organism>
    <name type="scientific">Bacteroides fragilis (strain YCH46)</name>
    <dbReference type="NCBI Taxonomy" id="295405"/>
    <lineage>
        <taxon>Bacteria</taxon>
        <taxon>Pseudomonadati</taxon>
        <taxon>Bacteroidota</taxon>
        <taxon>Bacteroidia</taxon>
        <taxon>Bacteroidales</taxon>
        <taxon>Bacteroidaceae</taxon>
        <taxon>Bacteroides</taxon>
    </lineage>
</organism>
<protein>
    <recommendedName>
        <fullName evidence="7">Glutamine synthetase</fullName>
        <shortName evidence="7">GS</shortName>
        <ecNumber evidence="9">6.3.1.2</ecNumber>
    </recommendedName>
    <alternativeName>
        <fullName evidence="8">Glutamate--ammonia ligase</fullName>
    </alternativeName>
    <alternativeName>
        <fullName evidence="7">Glutamine synthetase III</fullName>
        <shortName evidence="8">GSIII</shortName>
    </alternativeName>
</protein>
<proteinExistence type="evidence at protein level"/>
<name>GLNA3_BACFR</name>
<dbReference type="EC" id="6.3.1.2" evidence="9"/>
<dbReference type="EMBL" id="M28252">
    <property type="protein sequence ID" value="AAA62314.1"/>
    <property type="molecule type" value="Genomic_DNA"/>
</dbReference>
<dbReference type="EMBL" id="AP006841">
    <property type="protein sequence ID" value="BAD47790.1"/>
    <property type="molecule type" value="Genomic_DNA"/>
</dbReference>
<dbReference type="PIR" id="A37191">
    <property type="entry name" value="A37191"/>
</dbReference>
<dbReference type="RefSeq" id="WP_005785391.1">
    <property type="nucleotide sequence ID" value="NC_006347.1"/>
</dbReference>
<dbReference type="RefSeq" id="YP_098324.1">
    <property type="nucleotide sequence ID" value="NC_006347.1"/>
</dbReference>
<dbReference type="SMR" id="P15623"/>
<dbReference type="DIP" id="DIP-59116N"/>
<dbReference type="STRING" id="295405.BF1040"/>
<dbReference type="KEGG" id="bfr:BF1040"/>
<dbReference type="PATRIC" id="fig|295405.11.peg.1032"/>
<dbReference type="HOGENOM" id="CLU_024307_0_0_10"/>
<dbReference type="OrthoDB" id="9807095at2"/>
<dbReference type="BRENDA" id="6.3.1.2">
    <property type="organism ID" value="755"/>
</dbReference>
<dbReference type="Proteomes" id="UP000002197">
    <property type="component" value="Chromosome"/>
</dbReference>
<dbReference type="GO" id="GO:0005737">
    <property type="term" value="C:cytoplasm"/>
    <property type="evidence" value="ECO:0007669"/>
    <property type="project" value="UniProtKB-SubCell"/>
</dbReference>
<dbReference type="GO" id="GO:0005524">
    <property type="term" value="F:ATP binding"/>
    <property type="evidence" value="ECO:0007669"/>
    <property type="project" value="UniProtKB-KW"/>
</dbReference>
<dbReference type="GO" id="GO:0004356">
    <property type="term" value="F:glutamine synthetase activity"/>
    <property type="evidence" value="ECO:0007669"/>
    <property type="project" value="UniProtKB-EC"/>
</dbReference>
<dbReference type="GO" id="GO:0046872">
    <property type="term" value="F:metal ion binding"/>
    <property type="evidence" value="ECO:0007669"/>
    <property type="project" value="UniProtKB-KW"/>
</dbReference>
<dbReference type="GO" id="GO:0006542">
    <property type="term" value="P:glutamine biosynthetic process"/>
    <property type="evidence" value="ECO:0007669"/>
    <property type="project" value="InterPro"/>
</dbReference>
<dbReference type="Gene3D" id="1.20.120.1560">
    <property type="match status" value="1"/>
</dbReference>
<dbReference type="Gene3D" id="3.30.590.10">
    <property type="entry name" value="Glutamine synthetase/guanido kinase, catalytic domain"/>
    <property type="match status" value="1"/>
</dbReference>
<dbReference type="InterPro" id="IPR040577">
    <property type="entry name" value="Gln-synt_C"/>
</dbReference>
<dbReference type="InterPro" id="IPR008147">
    <property type="entry name" value="Gln_synt_N"/>
</dbReference>
<dbReference type="InterPro" id="IPR014746">
    <property type="entry name" value="Gln_synth/guanido_kin_cat_dom"/>
</dbReference>
<dbReference type="InterPro" id="IPR008146">
    <property type="entry name" value="Gln_synth_cat_dom"/>
</dbReference>
<dbReference type="InterPro" id="IPR027303">
    <property type="entry name" value="Gln_synth_gly_rich_site"/>
</dbReference>
<dbReference type="InterPro" id="IPR052725">
    <property type="entry name" value="GS_Type-3"/>
</dbReference>
<dbReference type="InterPro" id="IPR022147">
    <property type="entry name" value="GSIII_N"/>
</dbReference>
<dbReference type="PANTHER" id="PTHR42974">
    <property type="entry name" value="GLUTAMINE SYNTHETASE"/>
    <property type="match status" value="1"/>
</dbReference>
<dbReference type="PANTHER" id="PTHR42974:SF1">
    <property type="entry name" value="TYPE-3 GLUTAMINE SYNTHETASE"/>
    <property type="match status" value="1"/>
</dbReference>
<dbReference type="Pfam" id="PF00120">
    <property type="entry name" value="Gln-synt_C"/>
    <property type="match status" value="1"/>
</dbReference>
<dbReference type="Pfam" id="PF18318">
    <property type="entry name" value="Gln-synt_C-ter"/>
    <property type="match status" value="1"/>
</dbReference>
<dbReference type="Pfam" id="PF12437">
    <property type="entry name" value="GSIII_N"/>
    <property type="match status" value="1"/>
</dbReference>
<dbReference type="SMART" id="SM01230">
    <property type="entry name" value="Gln-synt_C"/>
    <property type="match status" value="1"/>
</dbReference>
<dbReference type="SUPFAM" id="SSF55931">
    <property type="entry name" value="Glutamine synthetase/guanido kinase"/>
    <property type="match status" value="1"/>
</dbReference>
<dbReference type="PROSITE" id="PS00181">
    <property type="entry name" value="GLNA_ATP"/>
    <property type="match status" value="1"/>
</dbReference>
<dbReference type="PROSITE" id="PS51986">
    <property type="entry name" value="GS_BETA_GRASP"/>
    <property type="match status" value="1"/>
</dbReference>
<dbReference type="PROSITE" id="PS51987">
    <property type="entry name" value="GS_CATALYTIC"/>
    <property type="match status" value="1"/>
</dbReference>
<evidence type="ECO:0000250" key="1">
    <source>
        <dbReference type="UniProtKB" id="P12425"/>
    </source>
</evidence>
<evidence type="ECO:0000250" key="2">
    <source>
        <dbReference type="UniProtKB" id="P77961"/>
    </source>
</evidence>
<evidence type="ECO:0000250" key="3">
    <source>
        <dbReference type="UniProtKB" id="P9WN39"/>
    </source>
</evidence>
<evidence type="ECO:0000255" key="4">
    <source>
        <dbReference type="PROSITE-ProRule" id="PRU01330"/>
    </source>
</evidence>
<evidence type="ECO:0000255" key="5">
    <source>
        <dbReference type="PROSITE-ProRule" id="PRU01331"/>
    </source>
</evidence>
<evidence type="ECO:0000269" key="6">
    <source ref="3"/>
</evidence>
<evidence type="ECO:0000303" key="7">
    <source>
    </source>
</evidence>
<evidence type="ECO:0000305" key="8"/>
<evidence type="ECO:0000305" key="9">
    <source ref="3"/>
</evidence>
<keyword id="KW-0067">ATP-binding</keyword>
<keyword id="KW-0963">Cytoplasm</keyword>
<keyword id="KW-0436">Ligase</keyword>
<keyword id="KW-0460">Magnesium</keyword>
<keyword id="KW-0479">Metal-binding</keyword>
<keyword id="KW-0547">Nucleotide-binding</keyword>
<accession>P15623</accession>
<accession>Q64XI6</accession>
<feature type="chain" id="PRO_0000153277" description="Glutamine synthetase">
    <location>
        <begin position="1"/>
        <end position="729"/>
    </location>
</feature>
<feature type="domain" description="GS beta-grasp" evidence="4">
    <location>
        <begin position="85"/>
        <end position="174"/>
    </location>
</feature>
<feature type="domain" description="GS catalytic" evidence="5">
    <location>
        <begin position="179"/>
        <end position="615"/>
    </location>
</feature>
<feature type="binding site" evidence="1">
    <location>
        <position position="215"/>
    </location>
    <ligand>
        <name>Mg(2+)</name>
        <dbReference type="ChEBI" id="CHEBI:18420"/>
        <label>1</label>
    </ligand>
</feature>
<feature type="binding site" evidence="1">
    <location>
        <position position="217"/>
    </location>
    <ligand>
        <name>Mg(2+)</name>
        <dbReference type="ChEBI" id="CHEBI:18420"/>
        <label>2</label>
    </ligand>
</feature>
<feature type="binding site" evidence="1">
    <location>
        <position position="286"/>
    </location>
    <ligand>
        <name>Mg(2+)</name>
        <dbReference type="ChEBI" id="CHEBI:18420"/>
        <label>2</label>
    </ligand>
</feature>
<feature type="binding site" evidence="1">
    <location>
        <position position="293"/>
    </location>
    <ligand>
        <name>Mg(2+)</name>
        <dbReference type="ChEBI" id="CHEBI:18420"/>
        <label>2</label>
    </ligand>
</feature>
<feature type="binding site" evidence="3">
    <location>
        <begin position="337"/>
        <end position="338"/>
    </location>
    <ligand>
        <name>L-glutamate</name>
        <dbReference type="ChEBI" id="CHEBI:29985"/>
    </ligand>
</feature>
<feature type="binding site" evidence="1">
    <location>
        <position position="338"/>
    </location>
    <ligand>
        <name>L-glutamate</name>
        <dbReference type="ChEBI" id="CHEBI:29985"/>
    </ligand>
</feature>
<feature type="binding site" evidence="1">
    <location>
        <position position="342"/>
    </location>
    <ligand>
        <name>Mg(2+)</name>
        <dbReference type="ChEBI" id="CHEBI:18420"/>
        <label>1</label>
    </ligand>
</feature>
<feature type="binding site" evidence="2">
    <location>
        <position position="346"/>
    </location>
    <ligand>
        <name>ATP</name>
        <dbReference type="ChEBI" id="CHEBI:30616"/>
    </ligand>
</feature>
<feature type="binding site" evidence="3">
    <location>
        <position position="458"/>
    </location>
    <ligand>
        <name>ATP</name>
        <dbReference type="ChEBI" id="CHEBI:30616"/>
    </ligand>
</feature>
<feature type="binding site" evidence="3">
    <location>
        <position position="458"/>
    </location>
    <ligand>
        <name>L-glutamate</name>
        <dbReference type="ChEBI" id="CHEBI:29985"/>
    </ligand>
</feature>
<feature type="sequence conflict" description="In Ref. 1; AAA62314." evidence="8" ref="1">
    <original>V</original>
    <variation>G</variation>
    <location>
        <position position="152"/>
    </location>
</feature>
<feature type="sequence conflict" description="In Ref. 1; AAA62314." evidence="8" ref="1">
    <original>P</original>
    <variation>L</variation>
    <location>
        <position position="531"/>
    </location>
</feature>
<feature type="sequence conflict" description="In Ref. 1; AAA62314." evidence="8" ref="1">
    <original>T</original>
    <variation>M</variation>
    <location>
        <position position="566"/>
    </location>
</feature>
<sequence length="729" mass="82825">MSKMRFFALQELSNRKPLEITTPSNKLSDYYASHVFDRKKMQEYLPKEAYKAVVDATEKGTPISREMADLIANGMKSWAKSLNVTHYTHWFQPLTDGTAEKHDGFIEFGEDGEVIERFSGKLLIQQEPDASSFPNGGIRNTFEARGYTAWDVSSPAFVVDTTLCIPTIFISYTGEALDYKTPLLKALAAVDKAATEVCQLFDKNITRVFTNLGWEQEYFLVDTSLYNARPDLRLTGRTLMGHSSAKDQQLEDHYFGSIPPRVTAFMKELEIECHKLGIPVKTRHNEVAPNQFELAPIFENCNLANDHNQLVMDLMKRIARKHHFAVLFHEKPYNGVNGSGKHNNWSLCTDTGINLFAPGKNPKGNMLFLTFLVNVLMMVHKNQDLLRASIMSAGNSHRLGANEAPPAILSIFLGSQLSATLDEIVRQVTNSKMTPEEKTTLKLGIGRIPEILLDTTDRNRTSPFAFTGNRFEFRAAGSSANCAAAMIAINAAMANQLNEFKASVDKLMEEGIGKDEAIFRILKENIIASEPIRFEGDGYSEEWKQEAARRGLTNICHVPEALMHYTDNQSRAVLIGERIFNETELACRLEVELEKYTMKVQIESRVLGDLAINHIVPIAVSYQNRLLENLCRMKEIFSEEEYEVMSADRKELIKEISHRVSAIKVLVRDMTEARKVANHKENFKEKAFAYEETVRPYLESIRDHIDHLEMEIDDEIWPLPKYRELLFTK</sequence>
<gene>
    <name evidence="7" type="primary">glnA</name>
    <name type="ordered locus">BF1040</name>
</gene>
<reference key="1">
    <citation type="journal article" date="1989" name="J. Gen. Microbiol.">
        <title>Molecular analysis of a novel glutamine synthetase of the anaerobe Bacteroides fragilis.</title>
        <authorList>
            <person name="Hill R.T."/>
            <person name="Parker J.R."/>
            <person name="Goodman H.J.K."/>
            <person name="Jones D.T."/>
            <person name="Woods D.R."/>
        </authorList>
    </citation>
    <scope>NUCLEOTIDE SEQUENCE [GENOMIC DNA]</scope>
    <source>
        <strain>BF1</strain>
    </source>
</reference>
<reference key="2">
    <citation type="journal article" date="2004" name="Proc. Natl. Acad. Sci. U.S.A.">
        <title>Genomic analysis of Bacteroides fragilis reveals extensive DNA inversions regulating cell surface adaptation.</title>
        <authorList>
            <person name="Kuwahara T."/>
            <person name="Yamashita A."/>
            <person name="Hirakawa H."/>
            <person name="Nakayama H."/>
            <person name="Toh H."/>
            <person name="Okada N."/>
            <person name="Kuhara S."/>
            <person name="Hattori M."/>
            <person name="Hayashi T."/>
            <person name="Ohnishi Y."/>
        </authorList>
    </citation>
    <scope>NUCLEOTIDE SEQUENCE [LARGE SCALE GENOMIC DNA]</scope>
    <source>
        <strain>YCH46</strain>
    </source>
</reference>
<reference key="3">
    <citation type="journal article" date="1987" name="J. Gen. Microbiol.">
        <title>Novel structure, properties and inactivation of glutamine synthetase cloned from Bacteroides fragilis.</title>
        <authorList>
            <person name="Southern J.A."/>
            <person name="Parker J.R."/>
            <person name="Woods D.R."/>
        </authorList>
    </citation>
    <scope>FUNCTION</scope>
    <scope>ACTIVITY REGULATION</scope>
    <scope>SUBUNIT</scope>
    <source>
        <strain>BF1</strain>
    </source>
</reference>